<comment type="function">
    <text evidence="1">Together with its co-chaperonin GroES, plays an essential role in assisting protein folding. The GroEL-GroES system forms a nano-cage that allows encapsulation of the non-native substrate proteins and provides a physical environment optimized to promote and accelerate protein folding.</text>
</comment>
<comment type="catalytic activity">
    <reaction evidence="1">
        <text>ATP + H2O + a folded polypeptide = ADP + phosphate + an unfolded polypeptide.</text>
        <dbReference type="EC" id="5.6.1.7"/>
    </reaction>
</comment>
<comment type="subunit">
    <text evidence="1">Forms a cylinder of 14 subunits composed of two heptameric rings stacked back-to-back. Interacts with the co-chaperonin GroES.</text>
</comment>
<comment type="subcellular location">
    <subcellularLocation>
        <location evidence="1">Cytoplasm</location>
    </subcellularLocation>
</comment>
<comment type="similarity">
    <text evidence="1">Belongs to the chaperonin (HSP60) family.</text>
</comment>
<dbReference type="EC" id="5.6.1.7" evidence="1"/>
<dbReference type="EMBL" id="CP000712">
    <property type="protein sequence ID" value="ABQ80486.1"/>
    <property type="molecule type" value="Genomic_DNA"/>
</dbReference>
<dbReference type="SMR" id="A5W8M6"/>
<dbReference type="KEGG" id="ppf:Pput_4363"/>
<dbReference type="eggNOG" id="COG0459">
    <property type="taxonomic scope" value="Bacteria"/>
</dbReference>
<dbReference type="HOGENOM" id="CLU_016503_3_0_6"/>
<dbReference type="GO" id="GO:0005737">
    <property type="term" value="C:cytoplasm"/>
    <property type="evidence" value="ECO:0007669"/>
    <property type="project" value="UniProtKB-SubCell"/>
</dbReference>
<dbReference type="GO" id="GO:0005524">
    <property type="term" value="F:ATP binding"/>
    <property type="evidence" value="ECO:0007669"/>
    <property type="project" value="UniProtKB-UniRule"/>
</dbReference>
<dbReference type="GO" id="GO:0140662">
    <property type="term" value="F:ATP-dependent protein folding chaperone"/>
    <property type="evidence" value="ECO:0007669"/>
    <property type="project" value="InterPro"/>
</dbReference>
<dbReference type="GO" id="GO:0016853">
    <property type="term" value="F:isomerase activity"/>
    <property type="evidence" value="ECO:0007669"/>
    <property type="project" value="UniProtKB-KW"/>
</dbReference>
<dbReference type="GO" id="GO:0051082">
    <property type="term" value="F:unfolded protein binding"/>
    <property type="evidence" value="ECO:0007669"/>
    <property type="project" value="UniProtKB-UniRule"/>
</dbReference>
<dbReference type="GO" id="GO:0042026">
    <property type="term" value="P:protein refolding"/>
    <property type="evidence" value="ECO:0007669"/>
    <property type="project" value="UniProtKB-UniRule"/>
</dbReference>
<dbReference type="CDD" id="cd03344">
    <property type="entry name" value="GroEL"/>
    <property type="match status" value="1"/>
</dbReference>
<dbReference type="FunFam" id="1.10.560.10:FF:000001">
    <property type="entry name" value="60 kDa chaperonin"/>
    <property type="match status" value="1"/>
</dbReference>
<dbReference type="FunFam" id="3.50.7.10:FF:000001">
    <property type="entry name" value="60 kDa chaperonin"/>
    <property type="match status" value="1"/>
</dbReference>
<dbReference type="Gene3D" id="3.50.7.10">
    <property type="entry name" value="GroEL"/>
    <property type="match status" value="1"/>
</dbReference>
<dbReference type="Gene3D" id="1.10.560.10">
    <property type="entry name" value="GroEL-like equatorial domain"/>
    <property type="match status" value="1"/>
</dbReference>
<dbReference type="Gene3D" id="3.30.260.10">
    <property type="entry name" value="TCP-1-like chaperonin intermediate domain"/>
    <property type="match status" value="1"/>
</dbReference>
<dbReference type="HAMAP" id="MF_00600">
    <property type="entry name" value="CH60"/>
    <property type="match status" value="1"/>
</dbReference>
<dbReference type="InterPro" id="IPR018370">
    <property type="entry name" value="Chaperonin_Cpn60_CS"/>
</dbReference>
<dbReference type="InterPro" id="IPR001844">
    <property type="entry name" value="Cpn60/GroEL"/>
</dbReference>
<dbReference type="InterPro" id="IPR002423">
    <property type="entry name" value="Cpn60/GroEL/TCP-1"/>
</dbReference>
<dbReference type="InterPro" id="IPR027409">
    <property type="entry name" value="GroEL-like_apical_dom_sf"/>
</dbReference>
<dbReference type="InterPro" id="IPR027413">
    <property type="entry name" value="GROEL-like_equatorial_sf"/>
</dbReference>
<dbReference type="InterPro" id="IPR027410">
    <property type="entry name" value="TCP-1-like_intermed_sf"/>
</dbReference>
<dbReference type="NCBIfam" id="TIGR02348">
    <property type="entry name" value="GroEL"/>
    <property type="match status" value="1"/>
</dbReference>
<dbReference type="NCBIfam" id="NF000592">
    <property type="entry name" value="PRK00013.1"/>
    <property type="match status" value="1"/>
</dbReference>
<dbReference type="NCBIfam" id="NF009487">
    <property type="entry name" value="PRK12849.1"/>
    <property type="match status" value="1"/>
</dbReference>
<dbReference type="NCBIfam" id="NF009488">
    <property type="entry name" value="PRK12850.1"/>
    <property type="match status" value="1"/>
</dbReference>
<dbReference type="NCBIfam" id="NF009489">
    <property type="entry name" value="PRK12851.1"/>
    <property type="match status" value="1"/>
</dbReference>
<dbReference type="PANTHER" id="PTHR45633">
    <property type="entry name" value="60 KDA HEAT SHOCK PROTEIN, MITOCHONDRIAL"/>
    <property type="match status" value="1"/>
</dbReference>
<dbReference type="Pfam" id="PF00118">
    <property type="entry name" value="Cpn60_TCP1"/>
    <property type="match status" value="1"/>
</dbReference>
<dbReference type="PRINTS" id="PR00298">
    <property type="entry name" value="CHAPERONIN60"/>
</dbReference>
<dbReference type="SUPFAM" id="SSF52029">
    <property type="entry name" value="GroEL apical domain-like"/>
    <property type="match status" value="1"/>
</dbReference>
<dbReference type="SUPFAM" id="SSF48592">
    <property type="entry name" value="GroEL equatorial domain-like"/>
    <property type="match status" value="1"/>
</dbReference>
<dbReference type="SUPFAM" id="SSF54849">
    <property type="entry name" value="GroEL-intermediate domain like"/>
    <property type="match status" value="1"/>
</dbReference>
<dbReference type="PROSITE" id="PS00296">
    <property type="entry name" value="CHAPERONINS_CPN60"/>
    <property type="match status" value="1"/>
</dbReference>
<reference key="1">
    <citation type="submission" date="2007-05" db="EMBL/GenBank/DDBJ databases">
        <title>Complete sequence of Pseudomonas putida F1.</title>
        <authorList>
            <consortium name="US DOE Joint Genome Institute"/>
            <person name="Copeland A."/>
            <person name="Lucas S."/>
            <person name="Lapidus A."/>
            <person name="Barry K."/>
            <person name="Detter J.C."/>
            <person name="Glavina del Rio T."/>
            <person name="Hammon N."/>
            <person name="Israni S."/>
            <person name="Dalin E."/>
            <person name="Tice H."/>
            <person name="Pitluck S."/>
            <person name="Chain P."/>
            <person name="Malfatti S."/>
            <person name="Shin M."/>
            <person name="Vergez L."/>
            <person name="Schmutz J."/>
            <person name="Larimer F."/>
            <person name="Land M."/>
            <person name="Hauser L."/>
            <person name="Kyrpides N."/>
            <person name="Lykidis A."/>
            <person name="Parales R."/>
            <person name="Richardson P."/>
        </authorList>
    </citation>
    <scope>NUCLEOTIDE SEQUENCE [LARGE SCALE GENOMIC DNA]</scope>
    <source>
        <strain>ATCC 700007 / DSM 6899 / JCM 31910 / BCRC 17059 / LMG 24140 / F1</strain>
    </source>
</reference>
<protein>
    <recommendedName>
        <fullName evidence="1">Chaperonin GroEL</fullName>
        <ecNumber evidence="1">5.6.1.7</ecNumber>
    </recommendedName>
    <alternativeName>
        <fullName evidence="1">60 kDa chaperonin</fullName>
    </alternativeName>
    <alternativeName>
        <fullName evidence="1">Chaperonin-60</fullName>
        <shortName evidence="1">Cpn60</shortName>
    </alternativeName>
</protein>
<evidence type="ECO:0000255" key="1">
    <source>
        <dbReference type="HAMAP-Rule" id="MF_00600"/>
    </source>
</evidence>
<keyword id="KW-0067">ATP-binding</keyword>
<keyword id="KW-0143">Chaperone</keyword>
<keyword id="KW-0963">Cytoplasm</keyword>
<keyword id="KW-0413">Isomerase</keyword>
<keyword id="KW-0547">Nucleotide-binding</keyword>
<gene>
    <name evidence="1" type="primary">groEL</name>
    <name evidence="1" type="synonym">groL</name>
    <name type="ordered locus">Pput_4363</name>
</gene>
<name>CH60_PSEP1</name>
<accession>A5W8M6</accession>
<organism>
    <name type="scientific">Pseudomonas putida (strain ATCC 700007 / DSM 6899 / JCM 31910 / BCRC 17059 / LMG 24140 / F1)</name>
    <dbReference type="NCBI Taxonomy" id="351746"/>
    <lineage>
        <taxon>Bacteria</taxon>
        <taxon>Pseudomonadati</taxon>
        <taxon>Pseudomonadota</taxon>
        <taxon>Gammaproteobacteria</taxon>
        <taxon>Pseudomonadales</taxon>
        <taxon>Pseudomonadaceae</taxon>
        <taxon>Pseudomonas</taxon>
    </lineage>
</organism>
<proteinExistence type="inferred from homology"/>
<sequence>MAAKDVKFGDSARKKMLVGVNVLADAVKATLGPKGRNVVLAKSFGAPTITKDGVSVAKEIELKDAFENMGAQLVKEVASKANDAAGDGTTTATVLAQAIVNEGLKAVAAGMNPMDLKRGIDKATAAVVAELKNLSKPCADSKAIAQVGTISANSDNSIGEIIAEAMEKVGKEGVITVEEGSGLENELSVVEGMQFDRGYLSPYFVNKPDTMVAELEGPLLLLVDKKISNIRELLPVLEAVAKAGRPLLIVAEDVEGEALATLVVNNMRGIVKVAAVKAPGFGDRRKAMLQDIAVLTGGQVISEEIGLSLETATLEHLGNAKRVILSKENTTIIDGAGADTEIEARVKQIRAQIEETSSDYDREKLQERLAKLAGGVAVIKVGAGTEVEMKEKKARVEDALHATRAAVEEGVVPGGGVALVRALAAIVDLKGDNEDQNVGIALLRRAVESPLRQITANAGDEPSVVADKVKQGSGNFGYNAATGEYGDMIEMGILDPAKVTRSALQAAASIGGLMITTEAMVADLPEDKPAAGMPDMGGMGGMGGMM</sequence>
<feature type="chain" id="PRO_1000025822" description="Chaperonin GroEL">
    <location>
        <begin position="1"/>
        <end position="546"/>
    </location>
</feature>
<feature type="binding site" evidence="1">
    <location>
        <begin position="30"/>
        <end position="33"/>
    </location>
    <ligand>
        <name>ATP</name>
        <dbReference type="ChEBI" id="CHEBI:30616"/>
    </ligand>
</feature>
<feature type="binding site" evidence="1">
    <location>
        <position position="51"/>
    </location>
    <ligand>
        <name>ATP</name>
        <dbReference type="ChEBI" id="CHEBI:30616"/>
    </ligand>
</feature>
<feature type="binding site" evidence="1">
    <location>
        <begin position="87"/>
        <end position="91"/>
    </location>
    <ligand>
        <name>ATP</name>
        <dbReference type="ChEBI" id="CHEBI:30616"/>
    </ligand>
</feature>
<feature type="binding site" evidence="1">
    <location>
        <position position="415"/>
    </location>
    <ligand>
        <name>ATP</name>
        <dbReference type="ChEBI" id="CHEBI:30616"/>
    </ligand>
</feature>
<feature type="binding site" evidence="1">
    <location>
        <begin position="479"/>
        <end position="481"/>
    </location>
    <ligand>
        <name>ATP</name>
        <dbReference type="ChEBI" id="CHEBI:30616"/>
    </ligand>
</feature>
<feature type="binding site" evidence="1">
    <location>
        <position position="495"/>
    </location>
    <ligand>
        <name>ATP</name>
        <dbReference type="ChEBI" id="CHEBI:30616"/>
    </ligand>
</feature>